<evidence type="ECO:0000255" key="1">
    <source>
        <dbReference type="HAMAP-Rule" id="MF_00186"/>
    </source>
</evidence>
<sequence length="496" mass="55014">MKKYILSLDQGTTSSRAILFNKKGEIVHSAQKEFTQHFPKPGWVEHNAQEIWGSILAVIATCLSEADVKPEQIAGIGITNQRETAVVWDKTTGKPIYNAIVWQSRQTAEICDELKEKGYGEMVREKTGLLIDAYFSGTKVKWILDNVEGAREKAENGDLLFGTIDTWLVWKLSGGKAHVTDYSNASRTLMFNIHDLQWDDELLDMLTVPKSMLPEVRPSSEVYGETIDYHFFGQNVPIAGVAGDQQAALFGQACFGEGMAKNTYGTGCFMLMNTGEKAVASEHGLLTTIAWGIDGKVNYALEGSIFVAGSAIQWLRDGMRMFKDASESEVYASRVESTDGVYVVPAFVGLGTPYWDSEVRGAMFGVTRGTTKEHFIRATLESLAYQTKDVLCAMEADSGIELKTLRVDGGAVKNNFLMKFQSDILDVPVERPVINETTALGAAYLAGLAVGYWKNQDEIKEQWHMDKRFEPTMEAETSEELYAGWKKAIEATKAFK</sequence>
<feature type="chain" id="PRO_1000020698" description="Glycerol kinase">
    <location>
        <begin position="1"/>
        <end position="496"/>
    </location>
</feature>
<feature type="binding site" evidence="1">
    <location>
        <position position="12"/>
    </location>
    <ligand>
        <name>ADP</name>
        <dbReference type="ChEBI" id="CHEBI:456216"/>
    </ligand>
</feature>
<feature type="binding site" evidence="1">
    <location>
        <position position="12"/>
    </location>
    <ligand>
        <name>ATP</name>
        <dbReference type="ChEBI" id="CHEBI:30616"/>
    </ligand>
</feature>
<feature type="binding site" evidence="1">
    <location>
        <position position="12"/>
    </location>
    <ligand>
        <name>sn-glycerol 3-phosphate</name>
        <dbReference type="ChEBI" id="CHEBI:57597"/>
    </ligand>
</feature>
<feature type="binding site" evidence="1">
    <location>
        <position position="13"/>
    </location>
    <ligand>
        <name>ATP</name>
        <dbReference type="ChEBI" id="CHEBI:30616"/>
    </ligand>
</feature>
<feature type="binding site" evidence="1">
    <location>
        <position position="14"/>
    </location>
    <ligand>
        <name>ATP</name>
        <dbReference type="ChEBI" id="CHEBI:30616"/>
    </ligand>
</feature>
<feature type="binding site" evidence="1">
    <location>
        <position position="16"/>
    </location>
    <ligand>
        <name>ADP</name>
        <dbReference type="ChEBI" id="CHEBI:456216"/>
    </ligand>
</feature>
<feature type="binding site" evidence="1">
    <location>
        <position position="82"/>
    </location>
    <ligand>
        <name>glycerol</name>
        <dbReference type="ChEBI" id="CHEBI:17754"/>
    </ligand>
</feature>
<feature type="binding site" evidence="1">
    <location>
        <position position="82"/>
    </location>
    <ligand>
        <name>sn-glycerol 3-phosphate</name>
        <dbReference type="ChEBI" id="CHEBI:57597"/>
    </ligand>
</feature>
<feature type="binding site" evidence="1">
    <location>
        <position position="83"/>
    </location>
    <ligand>
        <name>glycerol</name>
        <dbReference type="ChEBI" id="CHEBI:17754"/>
    </ligand>
</feature>
<feature type="binding site" evidence="1">
    <location>
        <position position="83"/>
    </location>
    <ligand>
        <name>sn-glycerol 3-phosphate</name>
        <dbReference type="ChEBI" id="CHEBI:57597"/>
    </ligand>
</feature>
<feature type="binding site" evidence="1">
    <location>
        <position position="134"/>
    </location>
    <ligand>
        <name>glycerol</name>
        <dbReference type="ChEBI" id="CHEBI:17754"/>
    </ligand>
</feature>
<feature type="binding site" evidence="1">
    <location>
        <position position="134"/>
    </location>
    <ligand>
        <name>sn-glycerol 3-phosphate</name>
        <dbReference type="ChEBI" id="CHEBI:57597"/>
    </ligand>
</feature>
<feature type="binding site" evidence="1">
    <location>
        <position position="244"/>
    </location>
    <ligand>
        <name>glycerol</name>
        <dbReference type="ChEBI" id="CHEBI:17754"/>
    </ligand>
</feature>
<feature type="binding site" evidence="1">
    <location>
        <position position="244"/>
    </location>
    <ligand>
        <name>sn-glycerol 3-phosphate</name>
        <dbReference type="ChEBI" id="CHEBI:57597"/>
    </ligand>
</feature>
<feature type="binding site" evidence="1">
    <location>
        <position position="245"/>
    </location>
    <ligand>
        <name>glycerol</name>
        <dbReference type="ChEBI" id="CHEBI:17754"/>
    </ligand>
</feature>
<feature type="binding site" evidence="1">
    <location>
        <position position="266"/>
    </location>
    <ligand>
        <name>ADP</name>
        <dbReference type="ChEBI" id="CHEBI:456216"/>
    </ligand>
</feature>
<feature type="binding site" evidence="1">
    <location>
        <position position="266"/>
    </location>
    <ligand>
        <name>ATP</name>
        <dbReference type="ChEBI" id="CHEBI:30616"/>
    </ligand>
</feature>
<feature type="binding site" evidence="1">
    <location>
        <position position="309"/>
    </location>
    <ligand>
        <name>ADP</name>
        <dbReference type="ChEBI" id="CHEBI:456216"/>
    </ligand>
</feature>
<feature type="binding site" evidence="1">
    <location>
        <position position="309"/>
    </location>
    <ligand>
        <name>ATP</name>
        <dbReference type="ChEBI" id="CHEBI:30616"/>
    </ligand>
</feature>
<feature type="binding site" evidence="1">
    <location>
        <position position="313"/>
    </location>
    <ligand>
        <name>ATP</name>
        <dbReference type="ChEBI" id="CHEBI:30616"/>
    </ligand>
</feature>
<feature type="binding site" evidence="1">
    <location>
        <position position="410"/>
    </location>
    <ligand>
        <name>ADP</name>
        <dbReference type="ChEBI" id="CHEBI:456216"/>
    </ligand>
</feature>
<feature type="binding site" evidence="1">
    <location>
        <position position="410"/>
    </location>
    <ligand>
        <name>ATP</name>
        <dbReference type="ChEBI" id="CHEBI:30616"/>
    </ligand>
</feature>
<feature type="binding site" evidence="1">
    <location>
        <position position="414"/>
    </location>
    <ligand>
        <name>ADP</name>
        <dbReference type="ChEBI" id="CHEBI:456216"/>
    </ligand>
</feature>
<feature type="modified residue" description="Phosphohistidine; by HPr" evidence="1">
    <location>
        <position position="230"/>
    </location>
</feature>
<keyword id="KW-0067">ATP-binding</keyword>
<keyword id="KW-0319">Glycerol metabolism</keyword>
<keyword id="KW-0418">Kinase</keyword>
<keyword id="KW-0547">Nucleotide-binding</keyword>
<keyword id="KW-0597">Phosphoprotein</keyword>
<keyword id="KW-0808">Transferase</keyword>
<protein>
    <recommendedName>
        <fullName evidence="1">Glycerol kinase</fullName>
        <ecNumber evidence="1">2.7.1.30</ecNumber>
    </recommendedName>
    <alternativeName>
        <fullName evidence="1">ATP:glycerol 3-phosphotransferase</fullName>
    </alternativeName>
    <alternativeName>
        <fullName evidence="1">Glycerokinase</fullName>
        <shortName evidence="1">GK</shortName>
    </alternativeName>
</protein>
<gene>
    <name evidence="1" type="primary">glpK</name>
    <name type="ordered locus">BALH_0918</name>
</gene>
<name>GLPK_BACAH</name>
<organism>
    <name type="scientific">Bacillus thuringiensis (strain Al Hakam)</name>
    <dbReference type="NCBI Taxonomy" id="412694"/>
    <lineage>
        <taxon>Bacteria</taxon>
        <taxon>Bacillati</taxon>
        <taxon>Bacillota</taxon>
        <taxon>Bacilli</taxon>
        <taxon>Bacillales</taxon>
        <taxon>Bacillaceae</taxon>
        <taxon>Bacillus</taxon>
        <taxon>Bacillus cereus group</taxon>
    </lineage>
</organism>
<accession>A0RAP3</accession>
<reference key="1">
    <citation type="journal article" date="2007" name="J. Bacteriol.">
        <title>The complete genome sequence of Bacillus thuringiensis Al Hakam.</title>
        <authorList>
            <person name="Challacombe J.F."/>
            <person name="Altherr M.R."/>
            <person name="Xie G."/>
            <person name="Bhotika S.S."/>
            <person name="Brown N."/>
            <person name="Bruce D."/>
            <person name="Campbell C.S."/>
            <person name="Campbell M.L."/>
            <person name="Chen J."/>
            <person name="Chertkov O."/>
            <person name="Cleland C."/>
            <person name="Dimitrijevic M."/>
            <person name="Doggett N.A."/>
            <person name="Fawcett J.J."/>
            <person name="Glavina T."/>
            <person name="Goodwin L.A."/>
            <person name="Green L.D."/>
            <person name="Han C.S."/>
            <person name="Hill K.K."/>
            <person name="Hitchcock P."/>
            <person name="Jackson P.J."/>
            <person name="Keim P."/>
            <person name="Kewalramani A.R."/>
            <person name="Longmire J."/>
            <person name="Lucas S."/>
            <person name="Malfatti S."/>
            <person name="Martinez D."/>
            <person name="McMurry K."/>
            <person name="Meincke L.J."/>
            <person name="Misra M."/>
            <person name="Moseman B.L."/>
            <person name="Mundt M."/>
            <person name="Munk A.C."/>
            <person name="Okinaka R.T."/>
            <person name="Parson-Quintana B."/>
            <person name="Reilly L.P."/>
            <person name="Richardson P."/>
            <person name="Robinson D.L."/>
            <person name="Saunders E."/>
            <person name="Tapia R."/>
            <person name="Tesmer J.G."/>
            <person name="Thayer N."/>
            <person name="Thompson L.S."/>
            <person name="Tice H."/>
            <person name="Ticknor L.O."/>
            <person name="Wills P.L."/>
            <person name="Gilna P."/>
            <person name="Brettin T.S."/>
        </authorList>
    </citation>
    <scope>NUCLEOTIDE SEQUENCE [LARGE SCALE GENOMIC DNA]</scope>
    <source>
        <strain>Al Hakam</strain>
    </source>
</reference>
<dbReference type="EC" id="2.7.1.30" evidence="1"/>
<dbReference type="EMBL" id="CP000485">
    <property type="protein sequence ID" value="ABK84286.1"/>
    <property type="molecule type" value="Genomic_DNA"/>
</dbReference>
<dbReference type="RefSeq" id="WP_000759987.1">
    <property type="nucleotide sequence ID" value="NC_008600.1"/>
</dbReference>
<dbReference type="SMR" id="A0RAP3"/>
<dbReference type="GeneID" id="69533472"/>
<dbReference type="KEGG" id="btl:BALH_0918"/>
<dbReference type="HOGENOM" id="CLU_009281_2_3_9"/>
<dbReference type="UniPathway" id="UPA00618">
    <property type="reaction ID" value="UER00672"/>
</dbReference>
<dbReference type="GO" id="GO:0005829">
    <property type="term" value="C:cytosol"/>
    <property type="evidence" value="ECO:0007669"/>
    <property type="project" value="TreeGrafter"/>
</dbReference>
<dbReference type="GO" id="GO:0005524">
    <property type="term" value="F:ATP binding"/>
    <property type="evidence" value="ECO:0007669"/>
    <property type="project" value="UniProtKB-UniRule"/>
</dbReference>
<dbReference type="GO" id="GO:0004370">
    <property type="term" value="F:glycerol kinase activity"/>
    <property type="evidence" value="ECO:0000250"/>
    <property type="project" value="UniProtKB"/>
</dbReference>
<dbReference type="GO" id="GO:0019563">
    <property type="term" value="P:glycerol catabolic process"/>
    <property type="evidence" value="ECO:0007669"/>
    <property type="project" value="UniProtKB-UniRule"/>
</dbReference>
<dbReference type="GO" id="GO:0006071">
    <property type="term" value="P:glycerol metabolic process"/>
    <property type="evidence" value="ECO:0000250"/>
    <property type="project" value="UniProtKB"/>
</dbReference>
<dbReference type="GO" id="GO:0006072">
    <property type="term" value="P:glycerol-3-phosphate metabolic process"/>
    <property type="evidence" value="ECO:0007669"/>
    <property type="project" value="InterPro"/>
</dbReference>
<dbReference type="CDD" id="cd07786">
    <property type="entry name" value="FGGY_EcGK_like"/>
    <property type="match status" value="1"/>
</dbReference>
<dbReference type="FunFam" id="3.30.420.40:FF:000007">
    <property type="entry name" value="Glycerol kinase"/>
    <property type="match status" value="1"/>
</dbReference>
<dbReference type="FunFam" id="3.30.420.40:FF:000008">
    <property type="entry name" value="Glycerol kinase"/>
    <property type="match status" value="1"/>
</dbReference>
<dbReference type="Gene3D" id="3.30.420.40">
    <property type="match status" value="2"/>
</dbReference>
<dbReference type="HAMAP" id="MF_00186">
    <property type="entry name" value="Glycerol_kin"/>
    <property type="match status" value="1"/>
</dbReference>
<dbReference type="InterPro" id="IPR043129">
    <property type="entry name" value="ATPase_NBD"/>
</dbReference>
<dbReference type="InterPro" id="IPR000577">
    <property type="entry name" value="Carb_kinase_FGGY"/>
</dbReference>
<dbReference type="InterPro" id="IPR018483">
    <property type="entry name" value="Carb_kinase_FGGY_CS"/>
</dbReference>
<dbReference type="InterPro" id="IPR018485">
    <property type="entry name" value="FGGY_C"/>
</dbReference>
<dbReference type="InterPro" id="IPR018484">
    <property type="entry name" value="FGGY_N"/>
</dbReference>
<dbReference type="InterPro" id="IPR005999">
    <property type="entry name" value="Glycerol_kin"/>
</dbReference>
<dbReference type="NCBIfam" id="TIGR01311">
    <property type="entry name" value="glycerol_kin"/>
    <property type="match status" value="1"/>
</dbReference>
<dbReference type="NCBIfam" id="NF000756">
    <property type="entry name" value="PRK00047.1"/>
    <property type="match status" value="1"/>
</dbReference>
<dbReference type="PANTHER" id="PTHR10196:SF69">
    <property type="entry name" value="GLYCEROL KINASE"/>
    <property type="match status" value="1"/>
</dbReference>
<dbReference type="PANTHER" id="PTHR10196">
    <property type="entry name" value="SUGAR KINASE"/>
    <property type="match status" value="1"/>
</dbReference>
<dbReference type="Pfam" id="PF02782">
    <property type="entry name" value="FGGY_C"/>
    <property type="match status" value="1"/>
</dbReference>
<dbReference type="Pfam" id="PF00370">
    <property type="entry name" value="FGGY_N"/>
    <property type="match status" value="1"/>
</dbReference>
<dbReference type="PIRSF" id="PIRSF000538">
    <property type="entry name" value="GlpK"/>
    <property type="match status" value="1"/>
</dbReference>
<dbReference type="SUPFAM" id="SSF53067">
    <property type="entry name" value="Actin-like ATPase domain"/>
    <property type="match status" value="2"/>
</dbReference>
<dbReference type="PROSITE" id="PS00933">
    <property type="entry name" value="FGGY_KINASES_1"/>
    <property type="match status" value="1"/>
</dbReference>
<dbReference type="PROSITE" id="PS00445">
    <property type="entry name" value="FGGY_KINASES_2"/>
    <property type="match status" value="1"/>
</dbReference>
<comment type="function">
    <text evidence="1">Key enzyme in the regulation of glycerol uptake and metabolism. Catalyzes the phosphorylation of glycerol to yield sn-glycerol 3-phosphate.</text>
</comment>
<comment type="catalytic activity">
    <reaction evidence="1">
        <text>glycerol + ATP = sn-glycerol 3-phosphate + ADP + H(+)</text>
        <dbReference type="Rhea" id="RHEA:21644"/>
        <dbReference type="ChEBI" id="CHEBI:15378"/>
        <dbReference type="ChEBI" id="CHEBI:17754"/>
        <dbReference type="ChEBI" id="CHEBI:30616"/>
        <dbReference type="ChEBI" id="CHEBI:57597"/>
        <dbReference type="ChEBI" id="CHEBI:456216"/>
        <dbReference type="EC" id="2.7.1.30"/>
    </reaction>
</comment>
<comment type="activity regulation">
    <text evidence="1">Activated by phosphorylation and inhibited by fructose 1,6-bisphosphate (FBP).</text>
</comment>
<comment type="pathway">
    <text evidence="1">Polyol metabolism; glycerol degradation via glycerol kinase pathway; sn-glycerol 3-phosphate from glycerol: step 1/1.</text>
</comment>
<comment type="subunit">
    <text evidence="1">Homotetramer and homodimer (in equilibrium).</text>
</comment>
<comment type="PTM">
    <text evidence="1">The phosphoenolpyruvate-dependent sugar phosphotransferase system (PTS), including enzyme I, and histidine-containing protein (HPr) are required for the phosphorylation, which leads to the activation of the enzyme.</text>
</comment>
<comment type="similarity">
    <text evidence="1">Belongs to the FGGY kinase family.</text>
</comment>
<proteinExistence type="inferred from homology"/>